<dbReference type="EMBL" id="CU329670">
    <property type="protein sequence ID" value="CAA92264.1"/>
    <property type="molecule type" value="Genomic_DNA"/>
</dbReference>
<dbReference type="PIR" id="T38743">
    <property type="entry name" value="T38743"/>
</dbReference>
<dbReference type="RefSeq" id="NP_593553.1">
    <property type="nucleotide sequence ID" value="NM_001018986.2"/>
</dbReference>
<dbReference type="BioGRID" id="279679">
    <property type="interactions" value="5"/>
</dbReference>
<dbReference type="FunCoup" id="Q10076">
    <property type="interactions" value="271"/>
</dbReference>
<dbReference type="STRING" id="284812.Q10076"/>
<dbReference type="iPTMnet" id="Q10076"/>
<dbReference type="PaxDb" id="4896-SPAC3H1.11.1"/>
<dbReference type="EnsemblFungi" id="SPAC3H1.11.1">
    <property type="protein sequence ID" value="SPAC3H1.11.1:pep"/>
    <property type="gene ID" value="SPAC3H1.11"/>
</dbReference>
<dbReference type="GeneID" id="2543251"/>
<dbReference type="KEGG" id="spo:2543251"/>
<dbReference type="PomBase" id="SPAC3H1.11">
    <property type="gene designation" value="hsr1"/>
</dbReference>
<dbReference type="VEuPathDB" id="FungiDB:SPAC3H1.11"/>
<dbReference type="eggNOG" id="KOG1721">
    <property type="taxonomic scope" value="Eukaryota"/>
</dbReference>
<dbReference type="HOGENOM" id="CLU_468648_0_0_1"/>
<dbReference type="InParanoid" id="Q10076"/>
<dbReference type="OMA" id="VAMQPLY"/>
<dbReference type="PhylomeDB" id="Q10076"/>
<dbReference type="PRO" id="PR:Q10076"/>
<dbReference type="Proteomes" id="UP000002485">
    <property type="component" value="Chromosome I"/>
</dbReference>
<dbReference type="GO" id="GO:0000785">
    <property type="term" value="C:chromatin"/>
    <property type="evidence" value="ECO:0000255"/>
    <property type="project" value="PomBase"/>
</dbReference>
<dbReference type="GO" id="GO:0005634">
    <property type="term" value="C:nucleus"/>
    <property type="evidence" value="ECO:0007005"/>
    <property type="project" value="PomBase"/>
</dbReference>
<dbReference type="GO" id="GO:0000987">
    <property type="term" value="F:cis-regulatory region sequence-specific DNA binding"/>
    <property type="evidence" value="ECO:0000318"/>
    <property type="project" value="GO_Central"/>
</dbReference>
<dbReference type="GO" id="GO:0000981">
    <property type="term" value="F:DNA-binding transcription factor activity, RNA polymerase II-specific"/>
    <property type="evidence" value="ECO:0000318"/>
    <property type="project" value="GO_Central"/>
</dbReference>
<dbReference type="GO" id="GO:0000978">
    <property type="term" value="F:RNA polymerase II cis-regulatory region sequence-specific DNA binding"/>
    <property type="evidence" value="ECO:0000266"/>
    <property type="project" value="PomBase"/>
</dbReference>
<dbReference type="GO" id="GO:0008270">
    <property type="term" value="F:zinc ion binding"/>
    <property type="evidence" value="ECO:0007669"/>
    <property type="project" value="UniProtKB-KW"/>
</dbReference>
<dbReference type="GO" id="GO:0006357">
    <property type="term" value="P:regulation of transcription by RNA polymerase II"/>
    <property type="evidence" value="ECO:0000315"/>
    <property type="project" value="PomBase"/>
</dbReference>
<dbReference type="GO" id="GO:0042594">
    <property type="term" value="P:response to starvation"/>
    <property type="evidence" value="ECO:0000318"/>
    <property type="project" value="GO_Central"/>
</dbReference>
<dbReference type="FunFam" id="3.30.160.60:FF:000145">
    <property type="entry name" value="Zinc finger protein 574"/>
    <property type="match status" value="1"/>
</dbReference>
<dbReference type="FunFam" id="3.30.160.60:FF:000110">
    <property type="entry name" value="Zinc finger protein-like"/>
    <property type="match status" value="1"/>
</dbReference>
<dbReference type="Gene3D" id="3.30.160.60">
    <property type="entry name" value="Classic Zinc Finger"/>
    <property type="match status" value="2"/>
</dbReference>
<dbReference type="InterPro" id="IPR051059">
    <property type="entry name" value="VerF-like"/>
</dbReference>
<dbReference type="InterPro" id="IPR036236">
    <property type="entry name" value="Znf_C2H2_sf"/>
</dbReference>
<dbReference type="InterPro" id="IPR013087">
    <property type="entry name" value="Znf_C2H2_type"/>
</dbReference>
<dbReference type="PANTHER" id="PTHR40626">
    <property type="entry name" value="MIP31509P"/>
    <property type="match status" value="1"/>
</dbReference>
<dbReference type="PANTHER" id="PTHR40626:SF11">
    <property type="entry name" value="ZINC FINGER PROTEIN YPR022C"/>
    <property type="match status" value="1"/>
</dbReference>
<dbReference type="Pfam" id="PF00096">
    <property type="entry name" value="zf-C2H2"/>
    <property type="match status" value="2"/>
</dbReference>
<dbReference type="SMART" id="SM00355">
    <property type="entry name" value="ZnF_C2H2"/>
    <property type="match status" value="2"/>
</dbReference>
<dbReference type="SUPFAM" id="SSF57667">
    <property type="entry name" value="beta-beta-alpha zinc fingers"/>
    <property type="match status" value="1"/>
</dbReference>
<dbReference type="PROSITE" id="PS00028">
    <property type="entry name" value="ZINC_FINGER_C2H2_1"/>
    <property type="match status" value="1"/>
</dbReference>
<dbReference type="PROSITE" id="PS50157">
    <property type="entry name" value="ZINC_FINGER_C2H2_2"/>
    <property type="match status" value="2"/>
</dbReference>
<reference key="1">
    <citation type="journal article" date="2002" name="Nature">
        <title>The genome sequence of Schizosaccharomyces pombe.</title>
        <authorList>
            <person name="Wood V."/>
            <person name="Gwilliam R."/>
            <person name="Rajandream M.A."/>
            <person name="Lyne M.H."/>
            <person name="Lyne R."/>
            <person name="Stewart A."/>
            <person name="Sgouros J.G."/>
            <person name="Peat N."/>
            <person name="Hayles J."/>
            <person name="Baker S.G."/>
            <person name="Basham D."/>
            <person name="Bowman S."/>
            <person name="Brooks K."/>
            <person name="Brown D."/>
            <person name="Brown S."/>
            <person name="Chillingworth T."/>
            <person name="Churcher C.M."/>
            <person name="Collins M."/>
            <person name="Connor R."/>
            <person name="Cronin A."/>
            <person name="Davis P."/>
            <person name="Feltwell T."/>
            <person name="Fraser A."/>
            <person name="Gentles S."/>
            <person name="Goble A."/>
            <person name="Hamlin N."/>
            <person name="Harris D.E."/>
            <person name="Hidalgo J."/>
            <person name="Hodgson G."/>
            <person name="Holroyd S."/>
            <person name="Hornsby T."/>
            <person name="Howarth S."/>
            <person name="Huckle E.J."/>
            <person name="Hunt S."/>
            <person name="Jagels K."/>
            <person name="James K.D."/>
            <person name="Jones L."/>
            <person name="Jones M."/>
            <person name="Leather S."/>
            <person name="McDonald S."/>
            <person name="McLean J."/>
            <person name="Mooney P."/>
            <person name="Moule S."/>
            <person name="Mungall K.L."/>
            <person name="Murphy L.D."/>
            <person name="Niblett D."/>
            <person name="Odell C."/>
            <person name="Oliver K."/>
            <person name="O'Neil S."/>
            <person name="Pearson D."/>
            <person name="Quail M.A."/>
            <person name="Rabbinowitsch E."/>
            <person name="Rutherford K.M."/>
            <person name="Rutter S."/>
            <person name="Saunders D."/>
            <person name="Seeger K."/>
            <person name="Sharp S."/>
            <person name="Skelton J."/>
            <person name="Simmonds M.N."/>
            <person name="Squares R."/>
            <person name="Squares S."/>
            <person name="Stevens K."/>
            <person name="Taylor K."/>
            <person name="Taylor R.G."/>
            <person name="Tivey A."/>
            <person name="Walsh S.V."/>
            <person name="Warren T."/>
            <person name="Whitehead S."/>
            <person name="Woodward J.R."/>
            <person name="Volckaert G."/>
            <person name="Aert R."/>
            <person name="Robben J."/>
            <person name="Grymonprez B."/>
            <person name="Weltjens I."/>
            <person name="Vanstreels E."/>
            <person name="Rieger M."/>
            <person name="Schaefer M."/>
            <person name="Mueller-Auer S."/>
            <person name="Gabel C."/>
            <person name="Fuchs M."/>
            <person name="Duesterhoeft A."/>
            <person name="Fritzc C."/>
            <person name="Holzer E."/>
            <person name="Moestl D."/>
            <person name="Hilbert H."/>
            <person name="Borzym K."/>
            <person name="Langer I."/>
            <person name="Beck A."/>
            <person name="Lehrach H."/>
            <person name="Reinhardt R."/>
            <person name="Pohl T.M."/>
            <person name="Eger P."/>
            <person name="Zimmermann W."/>
            <person name="Wedler H."/>
            <person name="Wambutt R."/>
            <person name="Purnelle B."/>
            <person name="Goffeau A."/>
            <person name="Cadieu E."/>
            <person name="Dreano S."/>
            <person name="Gloux S."/>
            <person name="Lelaure V."/>
            <person name="Mottier S."/>
            <person name="Galibert F."/>
            <person name="Aves S.J."/>
            <person name="Xiang Z."/>
            <person name="Hunt C."/>
            <person name="Moore K."/>
            <person name="Hurst S.M."/>
            <person name="Lucas M."/>
            <person name="Rochet M."/>
            <person name="Gaillardin C."/>
            <person name="Tallada V.A."/>
            <person name="Garzon A."/>
            <person name="Thode G."/>
            <person name="Daga R.R."/>
            <person name="Cruzado L."/>
            <person name="Jimenez J."/>
            <person name="Sanchez M."/>
            <person name="del Rey F."/>
            <person name="Benito J."/>
            <person name="Dominguez A."/>
            <person name="Revuelta J.L."/>
            <person name="Moreno S."/>
            <person name="Armstrong J."/>
            <person name="Forsburg S.L."/>
            <person name="Cerutti L."/>
            <person name="Lowe T."/>
            <person name="McCombie W.R."/>
            <person name="Paulsen I."/>
            <person name="Potashkin J."/>
            <person name="Shpakovski G.V."/>
            <person name="Ussery D."/>
            <person name="Barrell B.G."/>
            <person name="Nurse P."/>
        </authorList>
    </citation>
    <scope>NUCLEOTIDE SEQUENCE [LARGE SCALE GENOMIC DNA]</scope>
    <source>
        <strain>972 / ATCC 24843</strain>
    </source>
</reference>
<reference key="2">
    <citation type="journal article" date="2006" name="Nat. Biotechnol.">
        <title>ORFeome cloning and global analysis of protein localization in the fission yeast Schizosaccharomyces pombe.</title>
        <authorList>
            <person name="Matsuyama A."/>
            <person name="Arai R."/>
            <person name="Yashiroda Y."/>
            <person name="Shirai A."/>
            <person name="Kamata A."/>
            <person name="Sekido S."/>
            <person name="Kobayashi Y."/>
            <person name="Hashimoto A."/>
            <person name="Hamamoto M."/>
            <person name="Hiraoka Y."/>
            <person name="Horinouchi S."/>
            <person name="Yoshida M."/>
        </authorList>
    </citation>
    <scope>SUBCELLULAR LOCATION [LARGE SCALE ANALYSIS]</scope>
</reference>
<reference key="3">
    <citation type="journal article" date="2008" name="Mol. Biol. Cell">
        <title>Multiple pathways differentially regulate global oxidative stress responses in fission yeast.</title>
        <authorList>
            <person name="Chen D."/>
            <person name="Wilkinson C.R."/>
            <person name="Watt S."/>
            <person name="Penkett C.J."/>
            <person name="Toone W.M."/>
            <person name="Jones N."/>
            <person name="Bahler J."/>
        </authorList>
    </citation>
    <scope>FUNCTION</scope>
    <scope>INDUCTION</scope>
</reference>
<keyword id="KW-0238">DNA-binding</keyword>
<keyword id="KW-0479">Metal-binding</keyword>
<keyword id="KW-0539">Nucleus</keyword>
<keyword id="KW-1185">Reference proteome</keyword>
<keyword id="KW-0677">Repeat</keyword>
<keyword id="KW-0804">Transcription</keyword>
<keyword id="KW-0805">Transcription regulation</keyword>
<keyword id="KW-0862">Zinc</keyword>
<keyword id="KW-0863">Zinc-finger</keyword>
<evidence type="ECO:0000255" key="1">
    <source>
        <dbReference type="PROSITE-ProRule" id="PRU00042"/>
    </source>
</evidence>
<evidence type="ECO:0000256" key="2">
    <source>
        <dbReference type="SAM" id="MobiDB-lite"/>
    </source>
</evidence>
<evidence type="ECO:0000269" key="3">
    <source>
    </source>
</evidence>
<evidence type="ECO:0000269" key="4">
    <source>
    </source>
</evidence>
<gene>
    <name type="primary">hsr1</name>
    <name type="ORF">SPAC3H1.11</name>
</gene>
<accession>Q10076</accession>
<sequence>MVFFPEAMPLVTLSERMVPQVNTSPFAPAQSSSPLPSNSCREYSLPSHPSTHNSSVAYVDSQDNKPPLVSTLHFSLAPSLSPSSAQSHNTALITEPLTSFIGGTSQYPSASFSTSQHPSQVYNDGSTLNSNNTTQQLNNNNGFQPPPQNPGISKSRIAQYHQPSQTYDDTVDSSFYDWYKAGAQHNLAPPQSSHTEASQGYMYSTNTAHDATDIPSSFNFYNTQASTAPNPQEINYQWSHEYRPHTQYQNNLLRAQPNVNCENFPTTVPNYPFQQPSYNPNALVPSYTTLVSQLPPSPCLTVSSGPLSTASSIPSNCSCPSVKSSGPSYHAEQEVNVNSYNGGIPSTSYNDTPQQSVTGSYNSGETMSTYLNQTNTSGRSPNSMEATEQIGTIGTDGSMKRRKRRQPSNRKTSVPRSPGGKSFVCPECSKKFKRSEHLRRHIRSLHTSEKPFVCICGKRFSRRDNLRQHERLHVNASPRLACFFQPSGYYSSGAPGAPVQPQKPIEDLNKIPINQGMDSSQIENTNLMLSSQRPLSQQIVPEIAAYPNSIRPELLSKLPVQTPNQKMPLMNPMHQYQPYPSS</sequence>
<proteinExistence type="evidence at transcript level"/>
<feature type="chain" id="PRO_0000046865" description="Hydrogen peroxide stress regulator 1">
    <location>
        <begin position="1"/>
        <end position="582"/>
    </location>
</feature>
<feature type="zinc finger region" description="C2H2-type 1" evidence="1">
    <location>
        <begin position="423"/>
        <end position="446"/>
    </location>
</feature>
<feature type="zinc finger region" description="C2H2-type 2; atypical" evidence="1">
    <location>
        <begin position="452"/>
        <end position="473"/>
    </location>
</feature>
<feature type="region of interest" description="Disordered" evidence="2">
    <location>
        <begin position="24"/>
        <end position="55"/>
    </location>
</feature>
<feature type="region of interest" description="Disordered" evidence="2">
    <location>
        <begin position="107"/>
        <end position="154"/>
    </location>
</feature>
<feature type="region of interest" description="Disordered" evidence="2">
    <location>
        <begin position="347"/>
        <end position="366"/>
    </location>
</feature>
<feature type="region of interest" description="Disordered" evidence="2">
    <location>
        <begin position="375"/>
        <end position="422"/>
    </location>
</feature>
<feature type="compositionally biased region" description="Polar residues" evidence="2">
    <location>
        <begin position="107"/>
        <end position="125"/>
    </location>
</feature>
<feature type="compositionally biased region" description="Low complexity" evidence="2">
    <location>
        <begin position="126"/>
        <end position="143"/>
    </location>
</feature>
<feature type="compositionally biased region" description="Polar residues" evidence="2">
    <location>
        <begin position="375"/>
        <end position="392"/>
    </location>
</feature>
<name>HSR1_SCHPO</name>
<protein>
    <recommendedName>
        <fullName>Hydrogen peroxide stress regulator 1</fullName>
    </recommendedName>
</protein>
<organism>
    <name type="scientific">Schizosaccharomyces pombe (strain 972 / ATCC 24843)</name>
    <name type="common">Fission yeast</name>
    <dbReference type="NCBI Taxonomy" id="284812"/>
    <lineage>
        <taxon>Eukaryota</taxon>
        <taxon>Fungi</taxon>
        <taxon>Dikarya</taxon>
        <taxon>Ascomycota</taxon>
        <taxon>Taphrinomycotina</taxon>
        <taxon>Schizosaccharomycetes</taxon>
        <taxon>Schizosaccharomycetales</taxon>
        <taxon>Schizosaccharomycetaceae</taxon>
        <taxon>Schizosaccharomyces</taxon>
    </lineage>
</organism>
<comment type="function">
    <text evidence="4">Transcription factor that globally supports gene expression in response to hydrogen peroxide.</text>
</comment>
<comment type="subcellular location">
    <subcellularLocation>
        <location evidence="3">Nucleus</location>
    </subcellularLocation>
</comment>
<comment type="induction">
    <text evidence="4">Expression is induced by hydrogen peroxide, and this induction requires prr1 and pap1p as well as atf1p and sty1p.</text>
</comment>